<comment type="function">
    <text evidence="1">With CysN forms the ATP sulfurylase (ATPS) that catalyzes the adenylation of sulfate producing adenosine 5'-phosphosulfate (APS) and diphosphate, the first enzymatic step in sulfur assimilation pathway. APS synthesis involves the formation of a high-energy phosphoric-sulfuric acid anhydride bond driven by GTP hydrolysis by CysN coupled to ATP hydrolysis by CysD.</text>
</comment>
<comment type="catalytic activity">
    <reaction evidence="1">
        <text>sulfate + ATP + H(+) = adenosine 5'-phosphosulfate + diphosphate</text>
        <dbReference type="Rhea" id="RHEA:18133"/>
        <dbReference type="ChEBI" id="CHEBI:15378"/>
        <dbReference type="ChEBI" id="CHEBI:16189"/>
        <dbReference type="ChEBI" id="CHEBI:30616"/>
        <dbReference type="ChEBI" id="CHEBI:33019"/>
        <dbReference type="ChEBI" id="CHEBI:58243"/>
        <dbReference type="EC" id="2.7.7.4"/>
    </reaction>
</comment>
<comment type="pathway">
    <text evidence="1">Sulfur metabolism; hydrogen sulfide biosynthesis; sulfite from sulfate: step 1/3.</text>
</comment>
<comment type="subunit">
    <text evidence="1">Heterodimer composed of CysD, the smaller subunit, and CysN.</text>
</comment>
<comment type="similarity">
    <text evidence="1">Belongs to the PAPS reductase family. CysD subfamily.</text>
</comment>
<dbReference type="EC" id="2.7.7.4" evidence="1"/>
<dbReference type="EMBL" id="AE014299">
    <property type="protein sequence ID" value="AAN56711.1"/>
    <property type="molecule type" value="Genomic_DNA"/>
</dbReference>
<dbReference type="RefSeq" id="NP_719267.1">
    <property type="nucleotide sequence ID" value="NC_004347.2"/>
</dbReference>
<dbReference type="RefSeq" id="WP_011073513.1">
    <property type="nucleotide sequence ID" value="NC_004347.2"/>
</dbReference>
<dbReference type="SMR" id="Q8EB09"/>
<dbReference type="STRING" id="211586.SO_3727"/>
<dbReference type="PaxDb" id="211586-SO_3727"/>
<dbReference type="KEGG" id="son:SO_3727"/>
<dbReference type="PATRIC" id="fig|211586.12.peg.3609"/>
<dbReference type="eggNOG" id="COG0175">
    <property type="taxonomic scope" value="Bacteria"/>
</dbReference>
<dbReference type="HOGENOM" id="CLU_043026_0_0_6"/>
<dbReference type="OrthoDB" id="9772604at2"/>
<dbReference type="PhylomeDB" id="Q8EB09"/>
<dbReference type="BioCyc" id="SONE211586:G1GMP-3464-MONOMER"/>
<dbReference type="UniPathway" id="UPA00140">
    <property type="reaction ID" value="UER00204"/>
</dbReference>
<dbReference type="Proteomes" id="UP000008186">
    <property type="component" value="Chromosome"/>
</dbReference>
<dbReference type="GO" id="GO:0005524">
    <property type="term" value="F:ATP binding"/>
    <property type="evidence" value="ECO:0007669"/>
    <property type="project" value="UniProtKB-KW"/>
</dbReference>
<dbReference type="GO" id="GO:0004781">
    <property type="term" value="F:sulfate adenylyltransferase (ATP) activity"/>
    <property type="evidence" value="ECO:0007669"/>
    <property type="project" value="UniProtKB-UniRule"/>
</dbReference>
<dbReference type="GO" id="GO:0070814">
    <property type="term" value="P:hydrogen sulfide biosynthetic process"/>
    <property type="evidence" value="ECO:0007669"/>
    <property type="project" value="UniProtKB-UniRule"/>
</dbReference>
<dbReference type="GO" id="GO:0000103">
    <property type="term" value="P:sulfate assimilation"/>
    <property type="evidence" value="ECO:0007669"/>
    <property type="project" value="UniProtKB-UniRule"/>
</dbReference>
<dbReference type="CDD" id="cd23946">
    <property type="entry name" value="Sulfate_adenylyltransferase_2"/>
    <property type="match status" value="1"/>
</dbReference>
<dbReference type="FunFam" id="3.40.50.620:FF:000002">
    <property type="entry name" value="Sulfate adenylyltransferase subunit 2"/>
    <property type="match status" value="1"/>
</dbReference>
<dbReference type="Gene3D" id="3.40.50.620">
    <property type="entry name" value="HUPs"/>
    <property type="match status" value="1"/>
</dbReference>
<dbReference type="HAMAP" id="MF_00064">
    <property type="entry name" value="Sulf_adenylyltr_sub2"/>
    <property type="match status" value="1"/>
</dbReference>
<dbReference type="InterPro" id="IPR002500">
    <property type="entry name" value="PAPS_reduct_dom"/>
</dbReference>
<dbReference type="InterPro" id="IPR014729">
    <property type="entry name" value="Rossmann-like_a/b/a_fold"/>
</dbReference>
<dbReference type="InterPro" id="IPR011784">
    <property type="entry name" value="SO4_adenylTrfase_ssu"/>
</dbReference>
<dbReference type="InterPro" id="IPR050128">
    <property type="entry name" value="Sulfate_adenylyltrnsfr_sub2"/>
</dbReference>
<dbReference type="NCBIfam" id="TIGR02039">
    <property type="entry name" value="CysD"/>
    <property type="match status" value="1"/>
</dbReference>
<dbReference type="NCBIfam" id="NF003587">
    <property type="entry name" value="PRK05253.1"/>
    <property type="match status" value="1"/>
</dbReference>
<dbReference type="NCBIfam" id="NF009214">
    <property type="entry name" value="PRK12563.1"/>
    <property type="match status" value="1"/>
</dbReference>
<dbReference type="PANTHER" id="PTHR43196">
    <property type="entry name" value="SULFATE ADENYLYLTRANSFERASE SUBUNIT 2"/>
    <property type="match status" value="1"/>
</dbReference>
<dbReference type="PANTHER" id="PTHR43196:SF1">
    <property type="entry name" value="SULFATE ADENYLYLTRANSFERASE SUBUNIT 2"/>
    <property type="match status" value="1"/>
</dbReference>
<dbReference type="Pfam" id="PF01507">
    <property type="entry name" value="PAPS_reduct"/>
    <property type="match status" value="1"/>
</dbReference>
<dbReference type="PIRSF" id="PIRSF002936">
    <property type="entry name" value="CysDAde_trans"/>
    <property type="match status" value="1"/>
</dbReference>
<dbReference type="SUPFAM" id="SSF52402">
    <property type="entry name" value="Adenine nucleotide alpha hydrolases-like"/>
    <property type="match status" value="1"/>
</dbReference>
<name>CYSD_SHEON</name>
<organism>
    <name type="scientific">Shewanella oneidensis (strain ATCC 700550 / JCM 31522 / CIP 106686 / LMG 19005 / NCIMB 14063 / MR-1)</name>
    <dbReference type="NCBI Taxonomy" id="211586"/>
    <lineage>
        <taxon>Bacteria</taxon>
        <taxon>Pseudomonadati</taxon>
        <taxon>Pseudomonadota</taxon>
        <taxon>Gammaproteobacteria</taxon>
        <taxon>Alteromonadales</taxon>
        <taxon>Shewanellaceae</taxon>
        <taxon>Shewanella</taxon>
    </lineage>
</organism>
<proteinExistence type="inferred from homology"/>
<keyword id="KW-0067">ATP-binding</keyword>
<keyword id="KW-0547">Nucleotide-binding</keyword>
<keyword id="KW-0548">Nucleotidyltransferase</keyword>
<keyword id="KW-1185">Reference proteome</keyword>
<keyword id="KW-0808">Transferase</keyword>
<sequence>MAGRELSHLQQLEAESIQIIREVAAEFDNPVMLYSIGKDSSVMLHLARKAFYPGKIPFPLLHVDTGWKFKEMIAFRDAQAKKFGFELLTHTNPEGVAQGINPFDHGSAKHTDIMKTQGLKQALNQYGFDAAFGGARRDEEKSRAKERVYSFRDRHHRWDPKNQRPELWRTYNGAVNKGESIRVFPLSNWTELDIWQYIYQENIELVPLYFAAERPVVERAGQLIMADDERMKLEEGEAIKYEVVRFRTLGCYPLTAAMHSQADNLEKIIEEMLLTRSSERQGRLIDSDQSASMEQKKRQGYF</sequence>
<feature type="chain" id="PRO_1000008987" description="Sulfate adenylyltransferase subunit 2">
    <location>
        <begin position="1"/>
        <end position="302"/>
    </location>
</feature>
<feature type="region of interest" description="Disordered" evidence="2">
    <location>
        <begin position="280"/>
        <end position="302"/>
    </location>
</feature>
<reference key="1">
    <citation type="journal article" date="2002" name="Nat. Biotechnol.">
        <title>Genome sequence of the dissimilatory metal ion-reducing bacterium Shewanella oneidensis.</title>
        <authorList>
            <person name="Heidelberg J.F."/>
            <person name="Paulsen I.T."/>
            <person name="Nelson K.E."/>
            <person name="Gaidos E.J."/>
            <person name="Nelson W.C."/>
            <person name="Read T.D."/>
            <person name="Eisen J.A."/>
            <person name="Seshadri R."/>
            <person name="Ward N.L."/>
            <person name="Methe B.A."/>
            <person name="Clayton R.A."/>
            <person name="Meyer T."/>
            <person name="Tsapin A."/>
            <person name="Scott J."/>
            <person name="Beanan M.J."/>
            <person name="Brinkac L.M."/>
            <person name="Daugherty S.C."/>
            <person name="DeBoy R.T."/>
            <person name="Dodson R.J."/>
            <person name="Durkin A.S."/>
            <person name="Haft D.H."/>
            <person name="Kolonay J.F."/>
            <person name="Madupu R."/>
            <person name="Peterson J.D."/>
            <person name="Umayam L.A."/>
            <person name="White O."/>
            <person name="Wolf A.M."/>
            <person name="Vamathevan J.J."/>
            <person name="Weidman J.F."/>
            <person name="Impraim M."/>
            <person name="Lee K."/>
            <person name="Berry K.J."/>
            <person name="Lee C."/>
            <person name="Mueller J."/>
            <person name="Khouri H.M."/>
            <person name="Gill J."/>
            <person name="Utterback T.R."/>
            <person name="McDonald L.A."/>
            <person name="Feldblyum T.V."/>
            <person name="Smith H.O."/>
            <person name="Venter J.C."/>
            <person name="Nealson K.H."/>
            <person name="Fraser C.M."/>
        </authorList>
    </citation>
    <scope>NUCLEOTIDE SEQUENCE [LARGE SCALE GENOMIC DNA]</scope>
    <source>
        <strain>ATCC 700550 / JCM 31522 / CIP 106686 / LMG 19005 / NCIMB 14063 / MR-1</strain>
    </source>
</reference>
<evidence type="ECO:0000255" key="1">
    <source>
        <dbReference type="HAMAP-Rule" id="MF_00064"/>
    </source>
</evidence>
<evidence type="ECO:0000256" key="2">
    <source>
        <dbReference type="SAM" id="MobiDB-lite"/>
    </source>
</evidence>
<accession>Q8EB09</accession>
<gene>
    <name evidence="1" type="primary">cysD</name>
    <name type="ordered locus">SO_3727</name>
</gene>
<protein>
    <recommendedName>
        <fullName evidence="1">Sulfate adenylyltransferase subunit 2</fullName>
        <ecNumber evidence="1">2.7.7.4</ecNumber>
    </recommendedName>
    <alternativeName>
        <fullName evidence="1">ATP-sulfurylase small subunit</fullName>
    </alternativeName>
    <alternativeName>
        <fullName evidence="1">Sulfate adenylate transferase</fullName>
        <shortName evidence="1">SAT</shortName>
    </alternativeName>
</protein>